<sequence length="549" mass="58828">MTARPNPVTATVRSDIPMSDTVVSTTYSEQAAHLVARIDQDGLGSVRPSLYETARVISAAPWLPGEPRRLAYLLDEQAPDGSWGEGPERYRLLPTLSGVEAALAVLRRGATPTETARRLAGAVDRGLAALRALPRSGPWPDTAAAEILVPGLVAKIHEQIARIAEDGTPALDGWRPGPGPALPGGYDEALPAYVAKRYASVGSLPVKFHHTFEGIAGYLPPALIPDVPDLLGSSPAATAARAATASSAPSAGTVAALESVAERYAGSFPEAAPILVFERLWVAAALAHTHLPAAALPTVRRWAADIYDPRGVRGAPGLMKDADDTAMAVLVSSLVGLEHTLEPLDQFHNGSHYDCYIGEDTGSITANAHALQALGGYQRRNPETQHIYGPRTDKLRDWLIDQQRPEGPWPDKWHASPYYATARSVAALTRFGGGHAVTAVETAVTWALDTQRDDGSWGVWGGTAEETAYAVQILLSTSTHRPQHTRALHRAETYLGDSAGSGRHPALWHDKTLYAPDAMIEAEILAARQTLRTRHDLNRRVTTPIHAEK</sequence>
<proteinExistence type="inferred from homology"/>
<evidence type="ECO:0000250" key="1">
    <source>
        <dbReference type="UniProtKB" id="A0A0H5BB10"/>
    </source>
</evidence>
<evidence type="ECO:0000250" key="2">
    <source>
        <dbReference type="UniProtKB" id="D5SJ87"/>
    </source>
</evidence>
<evidence type="ECO:0000269" key="3">
    <source>
    </source>
</evidence>
<evidence type="ECO:0000303" key="4">
    <source>
    </source>
</evidence>
<evidence type="ECO:0000305" key="5"/>
<evidence type="ECO:0000305" key="6">
    <source>
    </source>
</evidence>
<evidence type="ECO:0000312" key="7">
    <source>
        <dbReference type="EMBL" id="BAR97461.1"/>
    </source>
</evidence>
<protein>
    <recommendedName>
        <fullName evidence="4">Copalyl diphosphate synthase</fullName>
        <ecNumber evidence="3">5.5.1.12</ecNumber>
    </recommendedName>
    <alternativeName>
        <fullName evidence="4">Type-B diterpene synthase</fullName>
    </alternativeName>
</protein>
<feature type="chain" id="PRO_0000444811" description="Copalyl diphosphate synthase">
    <location>
        <begin position="1"/>
        <end position="549"/>
    </location>
</feature>
<feature type="short sequence motif" description="DXDDTA motif" evidence="2">
    <location>
        <begin position="321"/>
        <end position="326"/>
    </location>
</feature>
<feature type="short sequence motif" description="QXXDGSW motif" evidence="2">
    <location>
        <begin position="451"/>
        <end position="457"/>
    </location>
</feature>
<accession>A0A0H5BB17</accession>
<name>RMNB_STRAQ</name>
<gene>
    <name evidence="4" type="primary">rmnB</name>
</gene>
<comment type="function">
    <text evidence="3">Involved in the biosynthesis of the labdane-type bicyclic diterpene labda-8(17),12(E),14-triene. Catalyzes the conversion of geranylgeranyl diphosphate (GGDP) into (+)-copalyl diphosphate.</text>
</comment>
<comment type="catalytic activity">
    <reaction evidence="1">
        <text>(2E,6E,10E)-geranylgeranyl diphosphate = (+)-copalyl diphosphate</text>
        <dbReference type="Rhea" id="RHEA:24316"/>
        <dbReference type="ChEBI" id="CHEBI:58635"/>
        <dbReference type="ChEBI" id="CHEBI:58756"/>
        <dbReference type="EC" id="5.5.1.12"/>
    </reaction>
</comment>
<comment type="cofactor">
    <cofactor evidence="1">
        <name>Mg(2+)</name>
        <dbReference type="ChEBI" id="CHEBI:18420"/>
    </cofactor>
</comment>
<comment type="domain">
    <text evidence="6">The Asp-Xaa-Asp-Asp-Thr-Ala (DXDDTA) and Gln-Xaa-Xaa-Asp-Gly-Ser-Trp (QXXDGSW) motifs are expected to bind to Mg(2+).</text>
</comment>
<comment type="similarity">
    <text evidence="5">Belongs to the terpene synthase family.</text>
</comment>
<comment type="caution">
    <text evidence="3">Not expressed under laboratory conditions.</text>
</comment>
<reference evidence="4" key="1">
    <citation type="journal article" date="2016" name="J. Ind. Microbiol. Biotechnol.">
        <title>Biosynthesis of mercapturic acid derivative of the labdane-type diterpene, cyslabdan that potentiates imipenem activity against methicillin-resistant Staphylococcus aureus: cyslabdan is generated by mycothiol-mediated xenobiotic detoxification.</title>
        <authorList>
            <person name="Ikeda H."/>
            <person name="Shin-ya K."/>
            <person name="Nagamitsu T."/>
            <person name="Tomoda H."/>
        </authorList>
    </citation>
    <scope>NUCLEOTIDE SEQUENCE [GENOMIC DNA]</scope>
    <scope>FUNCTION</scope>
    <scope>DOMAIN</scope>
    <source>
        <strain evidence="7">GM95</strain>
    </source>
</reference>
<dbReference type="EC" id="5.5.1.12" evidence="3"/>
<dbReference type="EMBL" id="LC064029">
    <property type="protein sequence ID" value="BAR97461.1"/>
    <property type="molecule type" value="Genomic_DNA"/>
</dbReference>
<dbReference type="SMR" id="A0A0H5BB17"/>
<dbReference type="GO" id="GO:0050559">
    <property type="term" value="F:copalyl diphosphate synthase activity"/>
    <property type="evidence" value="ECO:0007669"/>
    <property type="project" value="UniProtKB-EC"/>
</dbReference>
<dbReference type="GO" id="GO:0000287">
    <property type="term" value="F:magnesium ion binding"/>
    <property type="evidence" value="ECO:0007669"/>
    <property type="project" value="TreeGrafter"/>
</dbReference>
<dbReference type="GO" id="GO:0010333">
    <property type="term" value="F:terpene synthase activity"/>
    <property type="evidence" value="ECO:0007669"/>
    <property type="project" value="InterPro"/>
</dbReference>
<dbReference type="GO" id="GO:0016102">
    <property type="term" value="P:diterpenoid biosynthetic process"/>
    <property type="evidence" value="ECO:0007669"/>
    <property type="project" value="TreeGrafter"/>
</dbReference>
<dbReference type="Gene3D" id="1.50.10.160">
    <property type="match status" value="1"/>
</dbReference>
<dbReference type="Gene3D" id="1.50.10.20">
    <property type="match status" value="1"/>
</dbReference>
<dbReference type="InterPro" id="IPR032696">
    <property type="entry name" value="SQ_cyclase_C"/>
</dbReference>
<dbReference type="InterPro" id="IPR050148">
    <property type="entry name" value="Terpene_synthase-like"/>
</dbReference>
<dbReference type="InterPro" id="IPR008930">
    <property type="entry name" value="Terpenoid_cyclase/PrenylTrfase"/>
</dbReference>
<dbReference type="PANTHER" id="PTHR31739:SF25">
    <property type="entry name" value="(E,E)-GERANYLLINALOOL SYNTHASE"/>
    <property type="match status" value="1"/>
</dbReference>
<dbReference type="PANTHER" id="PTHR31739">
    <property type="entry name" value="ENT-COPALYL DIPHOSPHATE SYNTHASE, CHLOROPLASTIC"/>
    <property type="match status" value="1"/>
</dbReference>
<dbReference type="Pfam" id="PF13243">
    <property type="entry name" value="SQHop_cyclase_C"/>
    <property type="match status" value="1"/>
</dbReference>
<dbReference type="SUPFAM" id="SSF48239">
    <property type="entry name" value="Terpenoid cyclases/Protein prenyltransferases"/>
    <property type="match status" value="1"/>
</dbReference>
<organism evidence="4">
    <name type="scientific">Streptomyces anulatus</name>
    <name type="common">Streptomyces chrysomallus</name>
    <dbReference type="NCBI Taxonomy" id="1892"/>
    <lineage>
        <taxon>Bacteria</taxon>
        <taxon>Bacillati</taxon>
        <taxon>Actinomycetota</taxon>
        <taxon>Actinomycetes</taxon>
        <taxon>Kitasatosporales</taxon>
        <taxon>Streptomycetaceae</taxon>
        <taxon>Streptomyces</taxon>
    </lineage>
</organism>
<keyword id="KW-0413">Isomerase</keyword>
<keyword id="KW-0460">Magnesium</keyword>
<keyword id="KW-0479">Metal-binding</keyword>